<evidence type="ECO:0000269" key="1">
    <source>
    </source>
</evidence>
<evidence type="ECO:0000303" key="2">
    <source>
    </source>
</evidence>
<evidence type="ECO:0000305" key="3"/>
<comment type="function">
    <text evidence="1">Antimicrobial peptide active against many Gram-negative enterobacterial and plant-associated bacterial species. Not active against other bacterial species like H.pylori, P.mirabilis, B.pertussis or N.gonorrhoeae.</text>
</comment>
<comment type="subcellular location">
    <subcellularLocation>
        <location evidence="1">Secreted</location>
    </subcellularLocation>
</comment>
<comment type="induction">
    <text evidence="1">By bacterial infection.</text>
</comment>
<comment type="mass spectrometry">
    <text>Apidaecin Ho +.</text>
</comment>
<comment type="similarity">
    <text evidence="3">Belongs to the apidaecin family.</text>
</comment>
<accession>C0HKX5</accession>
<feature type="peptide" id="PRO_0000441345" description="Apidaecin +" evidence="1">
    <location>
        <begin position="1"/>
        <end position="17"/>
    </location>
</feature>
<name>APD_DOLMA</name>
<sequence>GKPRPQQVPPRPPHPRL</sequence>
<protein>
    <recommendedName>
        <fullName evidence="2">Apidaecin +</fullName>
    </recommendedName>
</protein>
<proteinExistence type="evidence at protein level"/>
<keyword id="KW-0044">Antibiotic</keyword>
<keyword id="KW-0929">Antimicrobial</keyword>
<keyword id="KW-0903">Direct protein sequencing</keyword>
<keyword id="KW-0391">Immunity</keyword>
<keyword id="KW-0399">Innate immunity</keyword>
<keyword id="KW-0964">Secreted</keyword>
<dbReference type="GO" id="GO:0005615">
    <property type="term" value="C:extracellular space"/>
    <property type="evidence" value="ECO:0000314"/>
    <property type="project" value="UniProtKB"/>
</dbReference>
<dbReference type="GO" id="GO:0050829">
    <property type="term" value="P:defense response to Gram-negative bacterium"/>
    <property type="evidence" value="ECO:0000314"/>
    <property type="project" value="UniProtKB"/>
</dbReference>
<dbReference type="GO" id="GO:0045087">
    <property type="term" value="P:innate immune response"/>
    <property type="evidence" value="ECO:0007669"/>
    <property type="project" value="UniProtKB-KW"/>
</dbReference>
<reference evidence="3" key="1">
    <citation type="journal article" date="1994" name="J. Biol. Chem.">
        <title>Biodiversity of apidaecin-type peptide antibiotics. Prospects of manipulating the antibacterial spectrum and combating acquired resistance.</title>
        <authorList>
            <person name="Casteels P."/>
            <person name="Romagnolo J."/>
            <person name="Castle M."/>
            <person name="Casteels-Josson K."/>
            <person name="Erdjument-Bromage H."/>
            <person name="Tempst P."/>
        </authorList>
    </citation>
    <scope>PROTEIN SEQUENCE</scope>
    <scope>FUNCTION</scope>
    <scope>SUBCELLULAR LOCATION</scope>
    <scope>INDUCTION</scope>
    <scope>MASS SPECTROMETRY</scope>
    <source>
        <tissue evidence="2">Hemolymph</tissue>
    </source>
</reference>
<organism evidence="2">
    <name type="scientific">Dolichovespula maculata</name>
    <name type="common">Bald-faced hornet</name>
    <name type="synonym">Vespula maculata</name>
    <dbReference type="NCBI Taxonomy" id="7441"/>
    <lineage>
        <taxon>Eukaryota</taxon>
        <taxon>Metazoa</taxon>
        <taxon>Ecdysozoa</taxon>
        <taxon>Arthropoda</taxon>
        <taxon>Hexapoda</taxon>
        <taxon>Insecta</taxon>
        <taxon>Pterygota</taxon>
        <taxon>Neoptera</taxon>
        <taxon>Endopterygota</taxon>
        <taxon>Hymenoptera</taxon>
        <taxon>Apocrita</taxon>
        <taxon>Aculeata</taxon>
        <taxon>Vespoidea</taxon>
        <taxon>Vespidae</taxon>
        <taxon>Vespinae</taxon>
        <taxon>Dolichovespula</taxon>
    </lineage>
</organism>